<comment type="function">
    <text evidence="1">The UvrABC repair system catalyzes the recognition and processing of DNA lesions. UvrC both incises the 5' and 3' sides of the lesion. The N-terminal half is responsible for the 3' incision and the C-terminal half is responsible for the 5' incision.</text>
</comment>
<comment type="subunit">
    <text evidence="1">Interacts with UvrB in an incision complex.</text>
</comment>
<comment type="subcellular location">
    <subcellularLocation>
        <location evidence="1">Cytoplasm</location>
    </subcellularLocation>
</comment>
<comment type="similarity">
    <text evidence="1">Belongs to the UvrC family.</text>
</comment>
<organism>
    <name type="scientific">Mycolicibacterium smegmatis (strain ATCC 700084 / mc(2)155)</name>
    <name type="common">Mycobacterium smegmatis</name>
    <dbReference type="NCBI Taxonomy" id="246196"/>
    <lineage>
        <taxon>Bacteria</taxon>
        <taxon>Bacillati</taxon>
        <taxon>Actinomycetota</taxon>
        <taxon>Actinomycetes</taxon>
        <taxon>Mycobacteriales</taxon>
        <taxon>Mycobacteriaceae</taxon>
        <taxon>Mycolicibacterium</taxon>
    </lineage>
</organism>
<proteinExistence type="inferred from homology"/>
<keyword id="KW-0963">Cytoplasm</keyword>
<keyword id="KW-0227">DNA damage</keyword>
<keyword id="KW-0228">DNA excision</keyword>
<keyword id="KW-0234">DNA repair</keyword>
<keyword id="KW-0267">Excision nuclease</keyword>
<keyword id="KW-1185">Reference proteome</keyword>
<keyword id="KW-0742">SOS response</keyword>
<evidence type="ECO:0000255" key="1">
    <source>
        <dbReference type="HAMAP-Rule" id="MF_00203"/>
    </source>
</evidence>
<evidence type="ECO:0000256" key="2">
    <source>
        <dbReference type="SAM" id="MobiDB-lite"/>
    </source>
</evidence>
<name>UVRC_MYCS2</name>
<protein>
    <recommendedName>
        <fullName evidence="1">UvrABC system protein C</fullName>
        <shortName evidence="1">Protein UvrC</shortName>
    </recommendedName>
    <alternativeName>
        <fullName evidence="1">Excinuclease ABC subunit C</fullName>
    </alternativeName>
</protein>
<reference key="1">
    <citation type="submission" date="2006-10" db="EMBL/GenBank/DDBJ databases">
        <authorList>
            <person name="Fleischmann R.D."/>
            <person name="Dodson R.J."/>
            <person name="Haft D.H."/>
            <person name="Merkel J.S."/>
            <person name="Nelson W.C."/>
            <person name="Fraser C.M."/>
        </authorList>
    </citation>
    <scope>NUCLEOTIDE SEQUENCE [LARGE SCALE GENOMIC DNA]</scope>
    <source>
        <strain>ATCC 700084 / mc(2)155</strain>
    </source>
</reference>
<reference key="2">
    <citation type="journal article" date="2007" name="Genome Biol.">
        <title>Interrupted coding sequences in Mycobacterium smegmatis: authentic mutations or sequencing errors?</title>
        <authorList>
            <person name="Deshayes C."/>
            <person name="Perrodou E."/>
            <person name="Gallien S."/>
            <person name="Euphrasie D."/>
            <person name="Schaeffer C."/>
            <person name="Van-Dorsselaer A."/>
            <person name="Poch O."/>
            <person name="Lecompte O."/>
            <person name="Reyrat J.-M."/>
        </authorList>
    </citation>
    <scope>NUCLEOTIDE SEQUENCE [LARGE SCALE GENOMIC DNA]</scope>
    <source>
        <strain>ATCC 700084 / mc(2)155</strain>
    </source>
</reference>
<reference key="3">
    <citation type="journal article" date="2009" name="Genome Res.">
        <title>Ortho-proteogenomics: multiple proteomes investigation through orthology and a new MS-based protocol.</title>
        <authorList>
            <person name="Gallien S."/>
            <person name="Perrodou E."/>
            <person name="Carapito C."/>
            <person name="Deshayes C."/>
            <person name="Reyrat J.-M."/>
            <person name="Van Dorsselaer A."/>
            <person name="Poch O."/>
            <person name="Schaeffer C."/>
            <person name="Lecompte O."/>
        </authorList>
    </citation>
    <scope>NUCLEOTIDE SEQUENCE [LARGE SCALE GENOMIC DNA]</scope>
    <source>
        <strain>ATCC 700084 / mc(2)155</strain>
    </source>
</reference>
<feature type="chain" id="PRO_1000077809" description="UvrABC system protein C">
    <location>
        <begin position="1"/>
        <end position="706"/>
    </location>
</feature>
<feature type="domain" description="GIY-YIG" evidence="1">
    <location>
        <begin position="16"/>
        <end position="95"/>
    </location>
</feature>
<feature type="domain" description="UVR" evidence="1">
    <location>
        <begin position="208"/>
        <end position="243"/>
    </location>
</feature>
<feature type="region of interest" description="Disordered" evidence="2">
    <location>
        <begin position="651"/>
        <end position="706"/>
    </location>
</feature>
<feature type="compositionally biased region" description="Polar residues" evidence="2">
    <location>
        <begin position="692"/>
        <end position="706"/>
    </location>
</feature>
<gene>
    <name evidence="1" type="primary">uvrC</name>
    <name type="ordered locus">MSMEG_3078</name>
    <name type="ordered locus">MSMEI_3000</name>
</gene>
<dbReference type="EMBL" id="CP000480">
    <property type="protein sequence ID" value="ABK74829.1"/>
    <property type="molecule type" value="Genomic_DNA"/>
</dbReference>
<dbReference type="EMBL" id="CP001663">
    <property type="protein sequence ID" value="AFP39464.1"/>
    <property type="molecule type" value="Genomic_DNA"/>
</dbReference>
<dbReference type="RefSeq" id="WP_011728800.1">
    <property type="nucleotide sequence ID" value="NZ_SIJM01000002.1"/>
</dbReference>
<dbReference type="RefSeq" id="YP_887394.1">
    <property type="nucleotide sequence ID" value="NC_008596.1"/>
</dbReference>
<dbReference type="SMR" id="A0QWV6"/>
<dbReference type="STRING" id="246196.MSMEG_3078"/>
<dbReference type="PaxDb" id="246196-MSMEI_3000"/>
<dbReference type="GeneID" id="93457854"/>
<dbReference type="KEGG" id="msb:LJ00_15315"/>
<dbReference type="KEGG" id="msg:MSMEI_3000"/>
<dbReference type="KEGG" id="msm:MSMEG_3078"/>
<dbReference type="PATRIC" id="fig|246196.19.peg.3039"/>
<dbReference type="eggNOG" id="COG0322">
    <property type="taxonomic scope" value="Bacteria"/>
</dbReference>
<dbReference type="OrthoDB" id="9804933at2"/>
<dbReference type="Proteomes" id="UP000000757">
    <property type="component" value="Chromosome"/>
</dbReference>
<dbReference type="Proteomes" id="UP000006158">
    <property type="component" value="Chromosome"/>
</dbReference>
<dbReference type="GO" id="GO:0005737">
    <property type="term" value="C:cytoplasm"/>
    <property type="evidence" value="ECO:0007669"/>
    <property type="project" value="UniProtKB-SubCell"/>
</dbReference>
<dbReference type="GO" id="GO:0009380">
    <property type="term" value="C:excinuclease repair complex"/>
    <property type="evidence" value="ECO:0007669"/>
    <property type="project" value="InterPro"/>
</dbReference>
<dbReference type="GO" id="GO:0003677">
    <property type="term" value="F:DNA binding"/>
    <property type="evidence" value="ECO:0007669"/>
    <property type="project" value="UniProtKB-UniRule"/>
</dbReference>
<dbReference type="GO" id="GO:0009381">
    <property type="term" value="F:excinuclease ABC activity"/>
    <property type="evidence" value="ECO:0007669"/>
    <property type="project" value="UniProtKB-UniRule"/>
</dbReference>
<dbReference type="GO" id="GO:0006289">
    <property type="term" value="P:nucleotide-excision repair"/>
    <property type="evidence" value="ECO:0007669"/>
    <property type="project" value="UniProtKB-UniRule"/>
</dbReference>
<dbReference type="GO" id="GO:0009432">
    <property type="term" value="P:SOS response"/>
    <property type="evidence" value="ECO:0007669"/>
    <property type="project" value="UniProtKB-UniRule"/>
</dbReference>
<dbReference type="CDD" id="cd10434">
    <property type="entry name" value="GIY-YIG_UvrC_Cho"/>
    <property type="match status" value="1"/>
</dbReference>
<dbReference type="FunFam" id="3.30.420.340:FF:000003">
    <property type="entry name" value="UvrABC system protein C"/>
    <property type="match status" value="1"/>
</dbReference>
<dbReference type="FunFam" id="3.40.1440.10:FF:000001">
    <property type="entry name" value="UvrABC system protein C"/>
    <property type="match status" value="1"/>
</dbReference>
<dbReference type="Gene3D" id="1.10.150.20">
    <property type="entry name" value="5' to 3' exonuclease, C-terminal subdomain"/>
    <property type="match status" value="1"/>
</dbReference>
<dbReference type="Gene3D" id="3.40.1440.10">
    <property type="entry name" value="GIY-YIG endonuclease"/>
    <property type="match status" value="1"/>
</dbReference>
<dbReference type="Gene3D" id="4.10.860.10">
    <property type="entry name" value="UVR domain"/>
    <property type="match status" value="1"/>
</dbReference>
<dbReference type="Gene3D" id="3.30.420.340">
    <property type="entry name" value="UvrC, RNAse H endonuclease domain"/>
    <property type="match status" value="1"/>
</dbReference>
<dbReference type="HAMAP" id="MF_00203">
    <property type="entry name" value="UvrC"/>
    <property type="match status" value="1"/>
</dbReference>
<dbReference type="InterPro" id="IPR000305">
    <property type="entry name" value="GIY-YIG_endonuc"/>
</dbReference>
<dbReference type="InterPro" id="IPR035901">
    <property type="entry name" value="GIY-YIG_endonuc_sf"/>
</dbReference>
<dbReference type="InterPro" id="IPR047296">
    <property type="entry name" value="GIY-YIG_UvrC_Cho"/>
</dbReference>
<dbReference type="InterPro" id="IPR010994">
    <property type="entry name" value="RuvA_2-like"/>
</dbReference>
<dbReference type="InterPro" id="IPR001943">
    <property type="entry name" value="UVR_dom"/>
</dbReference>
<dbReference type="InterPro" id="IPR036876">
    <property type="entry name" value="UVR_dom_sf"/>
</dbReference>
<dbReference type="InterPro" id="IPR050066">
    <property type="entry name" value="UvrABC_protein_C"/>
</dbReference>
<dbReference type="InterPro" id="IPR004791">
    <property type="entry name" value="UvrC"/>
</dbReference>
<dbReference type="InterPro" id="IPR001162">
    <property type="entry name" value="UvrC_RNase_H_dom"/>
</dbReference>
<dbReference type="InterPro" id="IPR038476">
    <property type="entry name" value="UvrC_RNase_H_dom_sf"/>
</dbReference>
<dbReference type="NCBIfam" id="NF001824">
    <property type="entry name" value="PRK00558.1-5"/>
    <property type="match status" value="1"/>
</dbReference>
<dbReference type="NCBIfam" id="TIGR00194">
    <property type="entry name" value="uvrC"/>
    <property type="match status" value="1"/>
</dbReference>
<dbReference type="PANTHER" id="PTHR30562:SF1">
    <property type="entry name" value="UVRABC SYSTEM PROTEIN C"/>
    <property type="match status" value="1"/>
</dbReference>
<dbReference type="PANTHER" id="PTHR30562">
    <property type="entry name" value="UVRC/OXIDOREDUCTASE"/>
    <property type="match status" value="1"/>
</dbReference>
<dbReference type="Pfam" id="PF01541">
    <property type="entry name" value="GIY-YIG"/>
    <property type="match status" value="1"/>
</dbReference>
<dbReference type="Pfam" id="PF14520">
    <property type="entry name" value="HHH_5"/>
    <property type="match status" value="1"/>
</dbReference>
<dbReference type="Pfam" id="PF02151">
    <property type="entry name" value="UVR"/>
    <property type="match status" value="1"/>
</dbReference>
<dbReference type="Pfam" id="PF22920">
    <property type="entry name" value="UvrC_RNaseH"/>
    <property type="match status" value="1"/>
</dbReference>
<dbReference type="Pfam" id="PF08459">
    <property type="entry name" value="UvrC_RNaseH_dom"/>
    <property type="match status" value="1"/>
</dbReference>
<dbReference type="SMART" id="SM00465">
    <property type="entry name" value="GIYc"/>
    <property type="match status" value="1"/>
</dbReference>
<dbReference type="SUPFAM" id="SSF46600">
    <property type="entry name" value="C-terminal UvrC-binding domain of UvrB"/>
    <property type="match status" value="1"/>
</dbReference>
<dbReference type="SUPFAM" id="SSF82771">
    <property type="entry name" value="GIY-YIG endonuclease"/>
    <property type="match status" value="1"/>
</dbReference>
<dbReference type="SUPFAM" id="SSF47781">
    <property type="entry name" value="RuvA domain 2-like"/>
    <property type="match status" value="1"/>
</dbReference>
<dbReference type="PROSITE" id="PS50164">
    <property type="entry name" value="GIY_YIG"/>
    <property type="match status" value="1"/>
</dbReference>
<dbReference type="PROSITE" id="PS50151">
    <property type="entry name" value="UVR"/>
    <property type="match status" value="1"/>
</dbReference>
<dbReference type="PROSITE" id="PS50165">
    <property type="entry name" value="UVRC"/>
    <property type="match status" value="1"/>
</dbReference>
<sequence length="706" mass="77443">MPDPATYRPAPGSIPVEPGVYRFRDPHGRVIYVGKAKSLRSRLTSYFADITSLAPRTRQMVMTAGSVEWTVVTTEVEALQLEYNWIKEFDPRFNVRYRDDKSYPVLAVTLNEEYPRLMVYRGPRRKGVRYFGPYSHAWAIRETLDLLTRVFPARTCSAGVFKRHKQIDRPCLLGYIDKCSAPCVGRVSAEQHRQIVLDFCDFLGGKTDRLAKDMEQQMTAAAEQLDFERAARLRDDISALKRALEKQAVVFGDGTDADVVAFADDDLEAAVQVFHVRGGRVRGQRGWIVEKSSEPAATGDADLGQSGQEQLVEQFLTQFYGEQAELGSASDTGGDEATNPVPRQVLVPVLPPNADELATWLSGLRGSRVSLRVPVRGDKRALAETVQRNAQEALAQHKLKRAGDFNARSEALQSIQEALGLADAPLRIECVDISHVQGTDVVASLVVFEDGLPRKSDYRHYAIREAAGDGRSDDVASIAEVTRRRFLRHTSDSQPDPSAEQRPRRFAYPPNLFVVDGGAPQVNAAAAVLEDLGVDDVAVIGLAKRLEEVWVPSEPDPVILPRNSEGLYLLQRVRDEAHRFAISYHRSKRSKRMTASALDSVRGLGEHRRKALVAHFGSVARLKEATVDEITAVPGIGVATARAVQEALGVAPQNGTAPDPAPGTGDPQTPADPHSAATAADIEDDRHATGATGPQMNGSEQQVDRV</sequence>
<accession>A0QWV6</accession>
<accession>I7GAF4</accession>